<proteinExistence type="inferred from homology"/>
<dbReference type="EMBL" id="AE014075">
    <property type="protein sequence ID" value="AAN79498.1"/>
    <property type="status" value="ALT_INIT"/>
    <property type="molecule type" value="Genomic_DNA"/>
</dbReference>
<dbReference type="RefSeq" id="WP_000228473.1">
    <property type="nucleotide sequence ID" value="NZ_CP051263.1"/>
</dbReference>
<dbReference type="BMRB" id="P0ACJ1"/>
<dbReference type="SMR" id="P0ACJ1"/>
<dbReference type="STRING" id="199310.c1026"/>
<dbReference type="GeneID" id="97601058"/>
<dbReference type="KEGG" id="ecc:c1026"/>
<dbReference type="eggNOG" id="COG1522">
    <property type="taxonomic scope" value="Bacteria"/>
</dbReference>
<dbReference type="HOGENOM" id="CLU_091233_0_0_6"/>
<dbReference type="Proteomes" id="UP000001410">
    <property type="component" value="Chromosome"/>
</dbReference>
<dbReference type="GO" id="GO:0005829">
    <property type="term" value="C:cytosol"/>
    <property type="evidence" value="ECO:0007669"/>
    <property type="project" value="TreeGrafter"/>
</dbReference>
<dbReference type="GO" id="GO:0043565">
    <property type="term" value="F:sequence-specific DNA binding"/>
    <property type="evidence" value="ECO:0007669"/>
    <property type="project" value="InterPro"/>
</dbReference>
<dbReference type="GO" id="GO:0006524">
    <property type="term" value="P:alanine catabolic process"/>
    <property type="evidence" value="ECO:0007669"/>
    <property type="project" value="TreeGrafter"/>
</dbReference>
<dbReference type="GO" id="GO:0006355">
    <property type="term" value="P:regulation of DNA-templated transcription"/>
    <property type="evidence" value="ECO:0007669"/>
    <property type="project" value="UniProtKB-ARBA"/>
</dbReference>
<dbReference type="GO" id="GO:0043201">
    <property type="term" value="P:response to L-leucine"/>
    <property type="evidence" value="ECO:0007669"/>
    <property type="project" value="TreeGrafter"/>
</dbReference>
<dbReference type="CDD" id="cd00090">
    <property type="entry name" value="HTH_ARSR"/>
    <property type="match status" value="1"/>
</dbReference>
<dbReference type="FunFam" id="1.10.10.10:FF:000015">
    <property type="entry name" value="Leucine-responsive transcriptional regulator Lrp"/>
    <property type="match status" value="1"/>
</dbReference>
<dbReference type="FunFam" id="3.30.70.920:FF:000001">
    <property type="entry name" value="Transcriptional regulator, AsnC family"/>
    <property type="match status" value="1"/>
</dbReference>
<dbReference type="Gene3D" id="3.30.70.920">
    <property type="match status" value="1"/>
</dbReference>
<dbReference type="Gene3D" id="1.10.10.10">
    <property type="entry name" value="Winged helix-like DNA-binding domain superfamily/Winged helix DNA-binding domain"/>
    <property type="match status" value="1"/>
</dbReference>
<dbReference type="InterPro" id="IPR011991">
    <property type="entry name" value="ArsR-like_HTH"/>
</dbReference>
<dbReference type="InterPro" id="IPR000485">
    <property type="entry name" value="AsnC-type_HTH_dom"/>
</dbReference>
<dbReference type="InterPro" id="IPR011008">
    <property type="entry name" value="Dimeric_a/b-barrel"/>
</dbReference>
<dbReference type="InterPro" id="IPR019888">
    <property type="entry name" value="Tscrpt_reg_AsnC-like"/>
</dbReference>
<dbReference type="InterPro" id="IPR019887">
    <property type="entry name" value="Tscrpt_reg_AsnC/Lrp_C"/>
</dbReference>
<dbReference type="InterPro" id="IPR019885">
    <property type="entry name" value="Tscrpt_reg_HTH_AsnC-type_CS"/>
</dbReference>
<dbReference type="InterPro" id="IPR036388">
    <property type="entry name" value="WH-like_DNA-bd_sf"/>
</dbReference>
<dbReference type="InterPro" id="IPR036390">
    <property type="entry name" value="WH_DNA-bd_sf"/>
</dbReference>
<dbReference type="NCBIfam" id="NF008370">
    <property type="entry name" value="PRK11169.1"/>
    <property type="match status" value="1"/>
</dbReference>
<dbReference type="PANTHER" id="PTHR30154">
    <property type="entry name" value="LEUCINE-RESPONSIVE REGULATORY PROTEIN"/>
    <property type="match status" value="1"/>
</dbReference>
<dbReference type="PANTHER" id="PTHR30154:SF0">
    <property type="entry name" value="LEUCINE-RESPONSIVE REGULATORY PROTEIN"/>
    <property type="match status" value="1"/>
</dbReference>
<dbReference type="Pfam" id="PF01037">
    <property type="entry name" value="AsnC_trans_reg"/>
    <property type="match status" value="1"/>
</dbReference>
<dbReference type="Pfam" id="PF13412">
    <property type="entry name" value="HTH_24"/>
    <property type="match status" value="1"/>
</dbReference>
<dbReference type="PRINTS" id="PR00033">
    <property type="entry name" value="HTHASNC"/>
</dbReference>
<dbReference type="SMART" id="SM00344">
    <property type="entry name" value="HTH_ASNC"/>
    <property type="match status" value="1"/>
</dbReference>
<dbReference type="SUPFAM" id="SSF54909">
    <property type="entry name" value="Dimeric alpha+beta barrel"/>
    <property type="match status" value="1"/>
</dbReference>
<dbReference type="SUPFAM" id="SSF46785">
    <property type="entry name" value="Winged helix' DNA-binding domain"/>
    <property type="match status" value="1"/>
</dbReference>
<dbReference type="PROSITE" id="PS00519">
    <property type="entry name" value="HTH_ASNC_1"/>
    <property type="match status" value="1"/>
</dbReference>
<dbReference type="PROSITE" id="PS50956">
    <property type="entry name" value="HTH_ASNC_2"/>
    <property type="match status" value="1"/>
</dbReference>
<gene>
    <name type="primary">lrp</name>
    <name type="ordered locus">c1026</name>
</gene>
<name>LRP_ECOL6</name>
<sequence length="164" mass="18887">MVDSKKRPGKDLDRIDRNILNELQKDGRISNVELSKRVGLSPTPCLERVRRLERQGFIQGYTALLNPHYLDASLLVFVEITLNRGAPDVFEQFNTAVQKLEEIQECHLVSGDFDYLLKTRVPDMSAYRKLLGETLLRLPGVNDTRTYVVMEEVKQSNRLVIKTR</sequence>
<accession>P0ACJ1</accession>
<accession>P19494</accession>
<comment type="function">
    <text evidence="1">Mediates a global response to leucine. Exogenous leucine affects the expression of a number of different operons; lrp mediates this effect for at least some of these operons. For example it is regulator of the branched-chain amino acid transport genes (By similarity).</text>
</comment>
<comment type="subunit">
    <text evidence="1">Homodimer.</text>
</comment>
<comment type="sequence caution" evidence="3">
    <conflict type="erroneous initiation">
        <sequence resource="EMBL-CDS" id="AAN79498"/>
    </conflict>
</comment>
<feature type="initiator methionine" description="Removed" evidence="1">
    <location>
        <position position="1"/>
    </location>
</feature>
<feature type="chain" id="PRO_0000111730" description="Leucine-responsive regulatory protein">
    <location>
        <begin position="2"/>
        <end position="164"/>
    </location>
</feature>
<feature type="domain" description="HTH asnC-type" evidence="2">
    <location>
        <begin position="12"/>
        <end position="73"/>
    </location>
</feature>
<feature type="DNA-binding region" description="H-T-H motif" evidence="2">
    <location>
        <begin position="31"/>
        <end position="50"/>
    </location>
</feature>
<protein>
    <recommendedName>
        <fullName>Leucine-responsive regulatory protein</fullName>
    </recommendedName>
</protein>
<keyword id="KW-0010">Activator</keyword>
<keyword id="KW-0238">DNA-binding</keyword>
<keyword id="KW-1185">Reference proteome</keyword>
<keyword id="KW-0804">Transcription</keyword>
<keyword id="KW-0805">Transcription regulation</keyword>
<organism>
    <name type="scientific">Escherichia coli O6:H1 (strain CFT073 / ATCC 700928 / UPEC)</name>
    <dbReference type="NCBI Taxonomy" id="199310"/>
    <lineage>
        <taxon>Bacteria</taxon>
        <taxon>Pseudomonadati</taxon>
        <taxon>Pseudomonadota</taxon>
        <taxon>Gammaproteobacteria</taxon>
        <taxon>Enterobacterales</taxon>
        <taxon>Enterobacteriaceae</taxon>
        <taxon>Escherichia</taxon>
    </lineage>
</organism>
<evidence type="ECO:0000250" key="1"/>
<evidence type="ECO:0000255" key="2">
    <source>
        <dbReference type="PROSITE-ProRule" id="PRU00319"/>
    </source>
</evidence>
<evidence type="ECO:0000305" key="3"/>
<reference key="1">
    <citation type="journal article" date="2002" name="Proc. Natl. Acad. Sci. U.S.A.">
        <title>Extensive mosaic structure revealed by the complete genome sequence of uropathogenic Escherichia coli.</title>
        <authorList>
            <person name="Welch R.A."/>
            <person name="Burland V."/>
            <person name="Plunkett G. III"/>
            <person name="Redford P."/>
            <person name="Roesch P."/>
            <person name="Rasko D."/>
            <person name="Buckles E.L."/>
            <person name="Liou S.-R."/>
            <person name="Boutin A."/>
            <person name="Hackett J."/>
            <person name="Stroud D."/>
            <person name="Mayhew G.F."/>
            <person name="Rose D.J."/>
            <person name="Zhou S."/>
            <person name="Schwartz D.C."/>
            <person name="Perna N.T."/>
            <person name="Mobley H.L.T."/>
            <person name="Donnenberg M.S."/>
            <person name="Blattner F.R."/>
        </authorList>
    </citation>
    <scope>NUCLEOTIDE SEQUENCE [LARGE SCALE GENOMIC DNA]</scope>
    <source>
        <strain>CFT073 / ATCC 700928 / UPEC</strain>
    </source>
</reference>